<evidence type="ECO:0000255" key="1">
    <source>
        <dbReference type="HAMAP-Rule" id="MF_00454"/>
    </source>
</evidence>
<keyword id="KW-0997">Cell inner membrane</keyword>
<keyword id="KW-1003">Cell membrane</keyword>
<keyword id="KW-0407">Ion channel</keyword>
<keyword id="KW-0406">Ion transport</keyword>
<keyword id="KW-0472">Membrane</keyword>
<keyword id="KW-0479">Metal-binding</keyword>
<keyword id="KW-0915">Sodium</keyword>
<keyword id="KW-0812">Transmembrane</keyword>
<keyword id="KW-1133">Transmembrane helix</keyword>
<keyword id="KW-0813">Transport</keyword>
<accession>B5XZS9</accession>
<feature type="chain" id="PRO_1000125138" description="Fluoride-specific ion channel FluC">
    <location>
        <begin position="1"/>
        <end position="127"/>
    </location>
</feature>
<feature type="transmembrane region" description="Helical" evidence="1">
    <location>
        <begin position="4"/>
        <end position="24"/>
    </location>
</feature>
<feature type="transmembrane region" description="Helical" evidence="1">
    <location>
        <begin position="35"/>
        <end position="55"/>
    </location>
</feature>
<feature type="transmembrane region" description="Helical" evidence="1">
    <location>
        <begin position="71"/>
        <end position="91"/>
    </location>
</feature>
<feature type="transmembrane region" description="Helical" evidence="1">
    <location>
        <begin position="101"/>
        <end position="121"/>
    </location>
</feature>
<feature type="binding site" evidence="1">
    <location>
        <position position="75"/>
    </location>
    <ligand>
        <name>Na(+)</name>
        <dbReference type="ChEBI" id="CHEBI:29101"/>
        <note>structural</note>
    </ligand>
</feature>
<feature type="binding site" evidence="1">
    <location>
        <position position="78"/>
    </location>
    <ligand>
        <name>Na(+)</name>
        <dbReference type="ChEBI" id="CHEBI:29101"/>
        <note>structural</note>
    </ligand>
</feature>
<organism>
    <name type="scientific">Klebsiella pneumoniae (strain 342)</name>
    <dbReference type="NCBI Taxonomy" id="507522"/>
    <lineage>
        <taxon>Bacteria</taxon>
        <taxon>Pseudomonadati</taxon>
        <taxon>Pseudomonadota</taxon>
        <taxon>Gammaproteobacteria</taxon>
        <taxon>Enterobacterales</taxon>
        <taxon>Enterobacteriaceae</taxon>
        <taxon>Klebsiella/Raoultella group</taxon>
        <taxon>Klebsiella</taxon>
        <taxon>Klebsiella pneumoniae complex</taxon>
    </lineage>
</organism>
<dbReference type="EMBL" id="CP000964">
    <property type="protein sequence ID" value="ACI09873.1"/>
    <property type="molecule type" value="Genomic_DNA"/>
</dbReference>
<dbReference type="SMR" id="B5XZS9"/>
<dbReference type="KEGG" id="kpe:KPK_3916"/>
<dbReference type="HOGENOM" id="CLU_114342_3_3_6"/>
<dbReference type="Proteomes" id="UP000001734">
    <property type="component" value="Chromosome"/>
</dbReference>
<dbReference type="GO" id="GO:0005886">
    <property type="term" value="C:plasma membrane"/>
    <property type="evidence" value="ECO:0007669"/>
    <property type="project" value="UniProtKB-SubCell"/>
</dbReference>
<dbReference type="GO" id="GO:0062054">
    <property type="term" value="F:fluoride channel activity"/>
    <property type="evidence" value="ECO:0007669"/>
    <property type="project" value="UniProtKB-UniRule"/>
</dbReference>
<dbReference type="GO" id="GO:0046872">
    <property type="term" value="F:metal ion binding"/>
    <property type="evidence" value="ECO:0007669"/>
    <property type="project" value="UniProtKB-KW"/>
</dbReference>
<dbReference type="GO" id="GO:0140114">
    <property type="term" value="P:cellular detoxification of fluoride"/>
    <property type="evidence" value="ECO:0007669"/>
    <property type="project" value="UniProtKB-UniRule"/>
</dbReference>
<dbReference type="HAMAP" id="MF_00454">
    <property type="entry name" value="FluC"/>
    <property type="match status" value="1"/>
</dbReference>
<dbReference type="InterPro" id="IPR003691">
    <property type="entry name" value="FluC"/>
</dbReference>
<dbReference type="NCBIfam" id="TIGR00494">
    <property type="entry name" value="crcB"/>
    <property type="match status" value="1"/>
</dbReference>
<dbReference type="NCBIfam" id="NF010792">
    <property type="entry name" value="PRK14196.1"/>
    <property type="match status" value="1"/>
</dbReference>
<dbReference type="PANTHER" id="PTHR28259">
    <property type="entry name" value="FLUORIDE EXPORT PROTEIN 1-RELATED"/>
    <property type="match status" value="1"/>
</dbReference>
<dbReference type="PANTHER" id="PTHR28259:SF1">
    <property type="entry name" value="FLUORIDE EXPORT PROTEIN 1-RELATED"/>
    <property type="match status" value="1"/>
</dbReference>
<dbReference type="Pfam" id="PF02537">
    <property type="entry name" value="CRCB"/>
    <property type="match status" value="1"/>
</dbReference>
<comment type="function">
    <text evidence="1">Fluoride-specific ion channel. Important for reducing fluoride concentration in the cell, thus reducing its toxicity.</text>
</comment>
<comment type="catalytic activity">
    <reaction evidence="1">
        <text>fluoride(in) = fluoride(out)</text>
        <dbReference type="Rhea" id="RHEA:76159"/>
        <dbReference type="ChEBI" id="CHEBI:17051"/>
    </reaction>
    <physiologicalReaction direction="left-to-right" evidence="1">
        <dbReference type="Rhea" id="RHEA:76160"/>
    </physiologicalReaction>
</comment>
<comment type="activity regulation">
    <text evidence="1">Na(+) is not transported, but it plays an essential structural role and its presence is essential for fluoride channel function.</text>
</comment>
<comment type="subcellular location">
    <subcellularLocation>
        <location evidence="1">Cell inner membrane</location>
        <topology evidence="1">Multi-pass membrane protein</topology>
    </subcellularLocation>
</comment>
<comment type="similarity">
    <text evidence="1">Belongs to the fluoride channel Fluc/FEX (TC 1.A.43) family.</text>
</comment>
<protein>
    <recommendedName>
        <fullName evidence="1">Fluoride-specific ion channel FluC</fullName>
    </recommendedName>
</protein>
<reference key="1">
    <citation type="journal article" date="2008" name="PLoS Genet.">
        <title>Complete genome sequence of the N2-fixing broad host range endophyte Klebsiella pneumoniae 342 and virulence predictions verified in mice.</title>
        <authorList>
            <person name="Fouts D.E."/>
            <person name="Tyler H.L."/>
            <person name="DeBoy R.T."/>
            <person name="Daugherty S."/>
            <person name="Ren Q."/>
            <person name="Badger J.H."/>
            <person name="Durkin A.S."/>
            <person name="Huot H."/>
            <person name="Shrivastava S."/>
            <person name="Kothari S."/>
            <person name="Dodson R.J."/>
            <person name="Mohamoud Y."/>
            <person name="Khouri H."/>
            <person name="Roesch L.F.W."/>
            <person name="Krogfelt K.A."/>
            <person name="Struve C."/>
            <person name="Triplett E.W."/>
            <person name="Methe B.A."/>
        </authorList>
    </citation>
    <scope>NUCLEOTIDE SEQUENCE [LARGE SCALE GENOMIC DNA]</scope>
    <source>
        <strain>342</strain>
    </source>
</reference>
<name>FLUC_KLEP3</name>
<proteinExistence type="inferred from homology"/>
<gene>
    <name evidence="1" type="primary">fluC</name>
    <name evidence="1" type="synonym">crcB</name>
    <name type="ordered locus">KPK_3916</name>
</gene>
<sequence length="127" mass="13768">MFQLLCAVFIGGGTGSVLRWWLGMKLNPVHHAIPIGTLTANLVGAFVIGAGLAWFNRLTDIDPMWKLLITTGFCGGLTTFSTFSAEVVFLLQQGRVSWALLNVMVNLLGSFAMTAVAFWLFSQAASR</sequence>